<comment type="function">
    <text evidence="2 3 4">FMRFamide-like neuropeptide (PubMed:12821653, PubMed:14555955). Involved in modulating locomotion quiescence during the sleep-like state called lethargus which occurs during molting between larval and adult stages, acting via the G-protein coupled receptor npr-1 (PubMed:23764289). Plays a role in modulating social and feeding behavior (PubMed:14555955).</text>
</comment>
<comment type="function">
    <molecule>GLGPRPLRF-amide</molecule>
    <text evidence="2 3">Ligand to G-protein coupled receptor npr-1.</text>
</comment>
<comment type="subcellular location">
    <subcellularLocation>
        <location evidence="9">Secreted</location>
    </subcellularLocation>
</comment>
<comment type="tissue specificity">
    <text evidence="3">Expressed in the ADL, ASE and ASH sensory neurons, the URA motor neurons and the MC, M2 and M4 pharyngeal neurons.</text>
</comment>
<comment type="PTM">
    <text evidence="5">May be processed by convertase egl-3.</text>
</comment>
<comment type="mass spectrometry" mass="506.3" method="Electrospray" evidence="5">
    <molecule>GLGPRPLRF-amide</molecule>
</comment>
<comment type="disruption phenotype">
    <text evidence="3 4">Exacerbates bordering behavior, where animals accumulate at the edges of culture media (PubMed:14555955). Enhances clumping/aggregation behavior in a G-protein coupled receptor npr-1 mutant background (PubMed:14555955). Decreases locomotion quiescence, in an npr-1 mutant background, during the sleep-like state called lethargus which occurs during molting between larval and adult stages (PubMed:23764289).</text>
</comment>
<comment type="similarity">
    <text evidence="9">Belongs to the FARP (FMRFamide related peptide) family.</text>
</comment>
<comment type="caution">
    <text evidence="8">It has been reported that many phenotypes associated with the Bristol N2 reference allele of the receptor npr-1 may reflect a neomorphic gain-of-function sensitivity of the receptor to flp-18 in addition to sensitivity to flp-21.</text>
</comment>
<reference evidence="10" key="1">
    <citation type="journal article" date="1998" name="Science">
        <title>Genome sequence of the nematode C. elegans: a platform for investigating biology.</title>
        <authorList>
            <consortium name="The C. elegans sequencing consortium"/>
        </authorList>
    </citation>
    <scope>NUCLEOTIDE SEQUENCE [LARGE SCALE GENOMIC DNA]</scope>
    <source>
        <strain evidence="10">Bristol N2</strain>
    </source>
</reference>
<reference evidence="9" key="2">
    <citation type="journal article" date="2003" name="J. Biol. Chem.">
        <title>Differential activation of 'social' and 'solitary' variants of the Caenorhabditis elegans G protein-coupled receptor NPR-1 by its cognate ligand AF9.</title>
        <authorList>
            <person name="Kubiak T.M."/>
            <person name="Larsen M.J."/>
            <person name="Nulf S.C."/>
            <person name="Zantello M.R."/>
            <person name="Burton K.J."/>
            <person name="Bowman J.W."/>
            <person name="Modric T."/>
            <person name="Lowery D.E."/>
        </authorList>
    </citation>
    <scope>FUNCTION</scope>
</reference>
<reference evidence="9" key="3">
    <citation type="journal article" date="2003" name="Nat. Neurosci.">
        <title>Inhibition of Caenorhabditis elegans social feeding by FMRFamide-related peptide activation of NPR-1.</title>
        <authorList>
            <person name="Rogers C."/>
            <person name="Reale V."/>
            <person name="Kim K."/>
            <person name="Chatwin H."/>
            <person name="Li C."/>
            <person name="Evans P."/>
            <person name="de Bono M."/>
        </authorList>
    </citation>
    <scope>FUNCTION</scope>
    <scope>TISSUE SPECIFICITY</scope>
    <scope>DISRUPTION PHENOTYPE</scope>
</reference>
<reference evidence="9" key="4">
    <citation type="journal article" date="2013" name="Neuron">
        <title>Analysis of NPR-1 reveals a circuit mechanism for behavioral quiescence in C. elegans.</title>
        <authorList>
            <person name="Choi S."/>
            <person name="Chatzigeorgiou M."/>
            <person name="Taylor K.P."/>
            <person name="Schafer W.R."/>
            <person name="Kaplan J.M."/>
        </authorList>
    </citation>
    <scope>FUNCTION</scope>
    <scope>DISRUPTION PHENOTYPE</scope>
</reference>
<reference evidence="9" key="5">
    <citation type="journal article" date="2015" name="Trends Genet.">
        <title>The laboratory domestication of Caenorhabditis elegans.</title>
        <authorList>
            <person name="Sterken M.G."/>
            <person name="Snoek L.B."/>
            <person name="Kammenga J.E."/>
            <person name="Andersen E.C."/>
        </authorList>
    </citation>
    <scope>REVIEW OF FUNCTION</scope>
</reference>
<reference evidence="9" key="6">
    <citation type="journal article" date="2018" name="Neurochem. Res.">
        <title>Deciphering the Role of EGL-3 for Neuropeptides Processing in Caenorhabditis elegans Using High-Resolution Quadrupole-Orbitrap Mass Spectrometry.</title>
        <authorList>
            <person name="Salem J.B."/>
            <person name="Nkambeu B."/>
            <person name="Arvanitis D.N."/>
            <person name="Beaudry F."/>
        </authorList>
    </citation>
    <scope>PROTEOLYTIC CLEAVAGE</scope>
    <scope>MASS SPECTROMETRY</scope>
</reference>
<keyword id="KW-1185">Reference proteome</keyword>
<keyword id="KW-0964">Secreted</keyword>
<keyword id="KW-0732">Signal</keyword>
<organism evidence="10">
    <name type="scientific">Caenorhabditis elegans</name>
    <dbReference type="NCBI Taxonomy" id="6239"/>
    <lineage>
        <taxon>Eukaryota</taxon>
        <taxon>Metazoa</taxon>
        <taxon>Ecdysozoa</taxon>
        <taxon>Nematoda</taxon>
        <taxon>Chromadorea</taxon>
        <taxon>Rhabditida</taxon>
        <taxon>Rhabditina</taxon>
        <taxon>Rhabditomorpha</taxon>
        <taxon>Rhabditoidea</taxon>
        <taxon>Rhabditidae</taxon>
        <taxon>Peloderinae</taxon>
        <taxon>Caenorhabditis</taxon>
    </lineage>
</organism>
<dbReference type="EMBL" id="BX284605">
    <property type="protein sequence ID" value="CCD65774.1"/>
    <property type="molecule type" value="Genomic_DNA"/>
</dbReference>
<dbReference type="PIR" id="T15646">
    <property type="entry name" value="T15646"/>
</dbReference>
<dbReference type="RefSeq" id="NP_505011.2">
    <property type="nucleotide sequence ID" value="NM_072610.6"/>
</dbReference>
<dbReference type="FunCoup" id="Q18234">
    <property type="interactions" value="1357"/>
</dbReference>
<dbReference type="STRING" id="6239.C26F1.10.1"/>
<dbReference type="PaxDb" id="6239-C26F1.10"/>
<dbReference type="EnsemblMetazoa" id="C26F1.10.1">
    <property type="protein sequence ID" value="C26F1.10.1"/>
    <property type="gene ID" value="WBGene00001464"/>
</dbReference>
<dbReference type="GeneID" id="182944"/>
<dbReference type="KEGG" id="cel:CELE_C26F1.10"/>
<dbReference type="UCSC" id="C26F1.10">
    <property type="organism name" value="c. elegans"/>
</dbReference>
<dbReference type="AGR" id="WB:WBGene00001464"/>
<dbReference type="CTD" id="182944"/>
<dbReference type="WormBase" id="C26F1.10">
    <property type="protein sequence ID" value="CE30733"/>
    <property type="gene ID" value="WBGene00001464"/>
    <property type="gene designation" value="flp-21"/>
</dbReference>
<dbReference type="eggNOG" id="ENOG502TICS">
    <property type="taxonomic scope" value="Eukaryota"/>
</dbReference>
<dbReference type="HOGENOM" id="CLU_2814692_0_0_1"/>
<dbReference type="InParanoid" id="Q18234"/>
<dbReference type="OMA" id="DHGSMKR"/>
<dbReference type="OrthoDB" id="5844311at2759"/>
<dbReference type="PRO" id="PR:Q18234"/>
<dbReference type="Proteomes" id="UP000001940">
    <property type="component" value="Chromosome V"/>
</dbReference>
<dbReference type="Bgee" id="WBGene00001464">
    <property type="expression patterns" value="Expressed in larva and 3 other cell types or tissues"/>
</dbReference>
<dbReference type="GO" id="GO:0005615">
    <property type="term" value="C:extracellular space"/>
    <property type="evidence" value="ECO:0000305"/>
    <property type="project" value="WormBase"/>
</dbReference>
<dbReference type="GO" id="GO:0031841">
    <property type="term" value="F:neuropeptide Y receptor binding"/>
    <property type="evidence" value="ECO:0000314"/>
    <property type="project" value="WormBase"/>
</dbReference>
<dbReference type="GO" id="GO:0007631">
    <property type="term" value="P:feeding behavior"/>
    <property type="evidence" value="ECO:0000315"/>
    <property type="project" value="WormBase"/>
</dbReference>
<dbReference type="GO" id="GO:0007218">
    <property type="term" value="P:neuropeptide signaling pathway"/>
    <property type="evidence" value="ECO:0000314"/>
    <property type="project" value="WormBase"/>
</dbReference>
<dbReference type="GO" id="GO:0030431">
    <property type="term" value="P:sleep"/>
    <property type="evidence" value="ECO:0000315"/>
    <property type="project" value="UniProtKB"/>
</dbReference>
<gene>
    <name evidence="11" type="primary">flp-21</name>
    <name evidence="6" type="synonym">AF9</name>
    <name evidence="11" type="ORF">C26F1.10</name>
</gene>
<accession>Q18234</accession>
<protein>
    <recommendedName>
        <fullName evidence="9">FMRFamide-like neuropeptide 21</fullName>
    </recommendedName>
    <component>
        <recommendedName>
            <fullName evidence="6 7">GLGPRPLRF-amide</fullName>
        </recommendedName>
    </component>
</protein>
<name>FLP21_CAEEL</name>
<evidence type="ECO:0000255" key="1"/>
<evidence type="ECO:0000269" key="2">
    <source>
    </source>
</evidence>
<evidence type="ECO:0000269" key="3">
    <source>
    </source>
</evidence>
<evidence type="ECO:0000269" key="4">
    <source>
    </source>
</evidence>
<evidence type="ECO:0000269" key="5">
    <source>
    </source>
</evidence>
<evidence type="ECO:0000303" key="6">
    <source>
    </source>
</evidence>
<evidence type="ECO:0000303" key="7">
    <source>
    </source>
</evidence>
<evidence type="ECO:0000303" key="8">
    <source>
    </source>
</evidence>
<evidence type="ECO:0000305" key="9"/>
<evidence type="ECO:0000312" key="10">
    <source>
        <dbReference type="Proteomes" id="UP000001940"/>
    </source>
</evidence>
<evidence type="ECO:0000312" key="11">
    <source>
        <dbReference type="WormBase" id="C26F1.10"/>
    </source>
</evidence>
<sequence length="66" mass="7486">MRLFILLSCLLAWVLAAPYIDQEDALRVLNAYLEQFGPGSDRVYYVAEDDHGSMKRGLGPRPLRFG</sequence>
<proteinExistence type="evidence at protein level"/>
<feature type="signal peptide" evidence="1">
    <location>
        <begin position="1"/>
        <end position="16"/>
    </location>
</feature>
<feature type="chain" id="PRO_5004186958" description="FMRFamide-like neuropeptide 21" evidence="1">
    <location>
        <begin position="17"/>
        <end position="66"/>
    </location>
</feature>
<feature type="peptide" id="PRO_0000454189" description="GLGPRPLRF-amide" evidence="2">
    <location>
        <begin position="57"/>
        <end position="65"/>
    </location>
</feature>